<evidence type="ECO:0000255" key="1">
    <source>
        <dbReference type="HAMAP-Rule" id="MF_01338"/>
    </source>
</evidence>
<protein>
    <recommendedName>
        <fullName evidence="1">Ribulose bisphosphate carboxylase large chain</fullName>
        <shortName evidence="1">RuBisCO large subunit</shortName>
        <ecNumber evidence="1">4.1.1.39</ecNumber>
    </recommendedName>
</protein>
<dbReference type="EC" id="4.1.1.39" evidence="1"/>
<dbReference type="EMBL" id="Z77287">
    <property type="protein sequence ID" value="CAB01087.1"/>
    <property type="molecule type" value="Genomic_DNA"/>
</dbReference>
<dbReference type="SMR" id="P92463"/>
<dbReference type="GO" id="GO:0009507">
    <property type="term" value="C:chloroplast"/>
    <property type="evidence" value="ECO:0007669"/>
    <property type="project" value="UniProtKB-SubCell"/>
</dbReference>
<dbReference type="GO" id="GO:0000287">
    <property type="term" value="F:magnesium ion binding"/>
    <property type="evidence" value="ECO:0007669"/>
    <property type="project" value="InterPro"/>
</dbReference>
<dbReference type="GO" id="GO:0004497">
    <property type="term" value="F:monooxygenase activity"/>
    <property type="evidence" value="ECO:0007669"/>
    <property type="project" value="UniProtKB-KW"/>
</dbReference>
<dbReference type="GO" id="GO:0016984">
    <property type="term" value="F:ribulose-bisphosphate carboxylase activity"/>
    <property type="evidence" value="ECO:0007669"/>
    <property type="project" value="UniProtKB-EC"/>
</dbReference>
<dbReference type="GO" id="GO:0009853">
    <property type="term" value="P:photorespiration"/>
    <property type="evidence" value="ECO:0007669"/>
    <property type="project" value="UniProtKB-KW"/>
</dbReference>
<dbReference type="GO" id="GO:0019253">
    <property type="term" value="P:reductive pentose-phosphate cycle"/>
    <property type="evidence" value="ECO:0007669"/>
    <property type="project" value="UniProtKB-KW"/>
</dbReference>
<dbReference type="CDD" id="cd08212">
    <property type="entry name" value="RuBisCO_large_I"/>
    <property type="match status" value="1"/>
</dbReference>
<dbReference type="FunFam" id="3.20.20.110:FF:000001">
    <property type="entry name" value="Ribulose bisphosphate carboxylase large chain"/>
    <property type="match status" value="1"/>
</dbReference>
<dbReference type="FunFam" id="3.30.70.150:FF:000001">
    <property type="entry name" value="Ribulose bisphosphate carboxylase large chain"/>
    <property type="match status" value="1"/>
</dbReference>
<dbReference type="Gene3D" id="3.20.20.110">
    <property type="entry name" value="Ribulose bisphosphate carboxylase, large subunit, C-terminal domain"/>
    <property type="match status" value="1"/>
</dbReference>
<dbReference type="Gene3D" id="3.30.70.150">
    <property type="entry name" value="RuBisCO large subunit, N-terminal domain"/>
    <property type="match status" value="1"/>
</dbReference>
<dbReference type="HAMAP" id="MF_01338">
    <property type="entry name" value="RuBisCO_L_type1"/>
    <property type="match status" value="1"/>
</dbReference>
<dbReference type="InterPro" id="IPR033966">
    <property type="entry name" value="RuBisCO"/>
</dbReference>
<dbReference type="InterPro" id="IPR020878">
    <property type="entry name" value="RuBisCo_large_chain_AS"/>
</dbReference>
<dbReference type="InterPro" id="IPR000685">
    <property type="entry name" value="RuBisCO_lsu_C"/>
</dbReference>
<dbReference type="InterPro" id="IPR036376">
    <property type="entry name" value="RuBisCO_lsu_C_sf"/>
</dbReference>
<dbReference type="InterPro" id="IPR017443">
    <property type="entry name" value="RuBisCO_lsu_fd_N"/>
</dbReference>
<dbReference type="InterPro" id="IPR036422">
    <property type="entry name" value="RuBisCO_lsu_N_sf"/>
</dbReference>
<dbReference type="InterPro" id="IPR020888">
    <property type="entry name" value="RuBisCO_lsuI"/>
</dbReference>
<dbReference type="NCBIfam" id="NF003252">
    <property type="entry name" value="PRK04208.1"/>
    <property type="match status" value="1"/>
</dbReference>
<dbReference type="PANTHER" id="PTHR42704">
    <property type="entry name" value="RIBULOSE BISPHOSPHATE CARBOXYLASE"/>
    <property type="match status" value="1"/>
</dbReference>
<dbReference type="PANTHER" id="PTHR42704:SF16">
    <property type="entry name" value="RIBULOSE BISPHOSPHATE CARBOXYLASE LARGE CHAIN"/>
    <property type="match status" value="1"/>
</dbReference>
<dbReference type="Pfam" id="PF00016">
    <property type="entry name" value="RuBisCO_large"/>
    <property type="match status" value="1"/>
</dbReference>
<dbReference type="Pfam" id="PF02788">
    <property type="entry name" value="RuBisCO_large_N"/>
    <property type="match status" value="1"/>
</dbReference>
<dbReference type="SFLD" id="SFLDS00014">
    <property type="entry name" value="RuBisCO"/>
    <property type="match status" value="1"/>
</dbReference>
<dbReference type="SFLD" id="SFLDG00301">
    <property type="entry name" value="RuBisCO-like_proteins"/>
    <property type="match status" value="1"/>
</dbReference>
<dbReference type="SUPFAM" id="SSF51649">
    <property type="entry name" value="RuBisCo, C-terminal domain"/>
    <property type="match status" value="1"/>
</dbReference>
<dbReference type="SUPFAM" id="SSF54966">
    <property type="entry name" value="RuBisCO, large subunit, small (N-terminal) domain"/>
    <property type="match status" value="1"/>
</dbReference>
<dbReference type="PROSITE" id="PS00157">
    <property type="entry name" value="RUBISCO_LARGE"/>
    <property type="match status" value="1"/>
</dbReference>
<keyword id="KW-0113">Calvin cycle</keyword>
<keyword id="KW-0120">Carbon dioxide fixation</keyword>
<keyword id="KW-0150">Chloroplast</keyword>
<keyword id="KW-1015">Disulfide bond</keyword>
<keyword id="KW-0456">Lyase</keyword>
<keyword id="KW-0460">Magnesium</keyword>
<keyword id="KW-0479">Metal-binding</keyword>
<keyword id="KW-0488">Methylation</keyword>
<keyword id="KW-0503">Monooxygenase</keyword>
<keyword id="KW-0560">Oxidoreductase</keyword>
<keyword id="KW-0601">Photorespiration</keyword>
<keyword id="KW-0602">Photosynthesis</keyword>
<keyword id="KW-0934">Plastid</keyword>
<proteinExistence type="inferred from homology"/>
<sequence>SAGFKAGVKDYRLTYYTPDYETKDTDILAAFRVTPQPGVPAEEAGAAVAAESSTGTWTTVWTDGLTSLDRYKGRCYHIEAVVGEENQYIAYVAYPLDLFEEGSVTNMFTSIVGNVFGFKALRALRLEDLRIPPSYSKTFQGPPHGIQVERDKLNKYGRPLLGCTIKPKLGLSAKNYGRAVYECLRGGLDFTKDDENVNSQPFMRWRDRFLFCAEAIYKAQAETGEIKGHYLNATAGTCEEMIKRAVFARELGVPIVMHDYLTGGFTANTTLAHYCRDNGLLLHIHRAMHAVIDRQKNHGMHFRVLAKALRMSGGDHIHAGTVVGELEGEREMTLGFVDLLRDDYIEKDRSRGIFFTQDWVSMPGVLPVASGGIHVWHMPALTEIFGDDSVLQFGGGTLGHPWGNAPGAVANRVALEACVQARNEGRDLAREGNEIIREACNWSPELAAACEVWKEIKFEFEPVDKT</sequence>
<reference key="1">
    <citation type="submission" date="1996-07" db="EMBL/GenBank/DDBJ databases">
        <authorList>
            <person name="Rudall P.J."/>
            <person name="Furness C.A."/>
            <person name="Fay M.F."/>
            <person name="Chase M.W."/>
        </authorList>
    </citation>
    <scope>NUCLEOTIDE SEQUENCE [GENOMIC DNA]</scope>
    <source>
        <tissue>Leaf</tissue>
    </source>
</reference>
<accession>P92463</accession>
<feature type="chain" id="PRO_0000062498" description="Ribulose bisphosphate carboxylase large chain">
    <location>
        <begin position="1" status="less than"/>
        <end position="466" status="greater than"/>
    </location>
</feature>
<feature type="active site" description="Proton acceptor" evidence="1">
    <location>
        <position position="166"/>
    </location>
</feature>
<feature type="active site" description="Proton acceptor" evidence="1">
    <location>
        <position position="285"/>
    </location>
</feature>
<feature type="binding site" description="in homodimeric partner" evidence="1">
    <location>
        <position position="114"/>
    </location>
    <ligand>
        <name>substrate</name>
    </ligand>
</feature>
<feature type="binding site" evidence="1">
    <location>
        <position position="164"/>
    </location>
    <ligand>
        <name>substrate</name>
    </ligand>
</feature>
<feature type="binding site" evidence="1">
    <location>
        <position position="168"/>
    </location>
    <ligand>
        <name>substrate</name>
    </ligand>
</feature>
<feature type="binding site" description="via carbamate group" evidence="1">
    <location>
        <position position="192"/>
    </location>
    <ligand>
        <name>Mg(2+)</name>
        <dbReference type="ChEBI" id="CHEBI:18420"/>
    </ligand>
</feature>
<feature type="binding site" evidence="1">
    <location>
        <position position="194"/>
    </location>
    <ligand>
        <name>Mg(2+)</name>
        <dbReference type="ChEBI" id="CHEBI:18420"/>
    </ligand>
</feature>
<feature type="binding site" evidence="1">
    <location>
        <position position="195"/>
    </location>
    <ligand>
        <name>Mg(2+)</name>
        <dbReference type="ChEBI" id="CHEBI:18420"/>
    </ligand>
</feature>
<feature type="binding site" evidence="1">
    <location>
        <position position="286"/>
    </location>
    <ligand>
        <name>substrate</name>
    </ligand>
</feature>
<feature type="binding site" evidence="1">
    <location>
        <position position="318"/>
    </location>
    <ligand>
        <name>substrate</name>
    </ligand>
</feature>
<feature type="binding site" evidence="1">
    <location>
        <position position="370"/>
    </location>
    <ligand>
        <name>substrate</name>
    </ligand>
</feature>
<feature type="modified residue" description="N6,N6,N6-trimethyllysine" evidence="1">
    <location>
        <position position="5"/>
    </location>
</feature>
<feature type="modified residue" description="N6-carboxylysine" evidence="1">
    <location>
        <position position="192"/>
    </location>
</feature>
<feature type="disulfide bond" description="Interchain; in linked form" evidence="1">
    <location>
        <position position="238"/>
    </location>
</feature>
<feature type="non-terminal residue">
    <location>
        <position position="1"/>
    </location>
</feature>
<feature type="non-terminal residue">
    <location>
        <position position="466"/>
    </location>
</feature>
<comment type="function">
    <text evidence="1">RuBisCO catalyzes two reactions: the carboxylation of D-ribulose 1,5-bisphosphate, the primary event in carbon dioxide fixation, as well as the oxidative fragmentation of the pentose substrate in the photorespiration process. Both reactions occur simultaneously and in competition at the same active site.</text>
</comment>
<comment type="catalytic activity">
    <reaction evidence="1">
        <text>2 (2R)-3-phosphoglycerate + 2 H(+) = D-ribulose 1,5-bisphosphate + CO2 + H2O</text>
        <dbReference type="Rhea" id="RHEA:23124"/>
        <dbReference type="ChEBI" id="CHEBI:15377"/>
        <dbReference type="ChEBI" id="CHEBI:15378"/>
        <dbReference type="ChEBI" id="CHEBI:16526"/>
        <dbReference type="ChEBI" id="CHEBI:57870"/>
        <dbReference type="ChEBI" id="CHEBI:58272"/>
        <dbReference type="EC" id="4.1.1.39"/>
    </reaction>
</comment>
<comment type="catalytic activity">
    <reaction evidence="1">
        <text>D-ribulose 1,5-bisphosphate + O2 = 2-phosphoglycolate + (2R)-3-phosphoglycerate + 2 H(+)</text>
        <dbReference type="Rhea" id="RHEA:36631"/>
        <dbReference type="ChEBI" id="CHEBI:15378"/>
        <dbReference type="ChEBI" id="CHEBI:15379"/>
        <dbReference type="ChEBI" id="CHEBI:57870"/>
        <dbReference type="ChEBI" id="CHEBI:58033"/>
        <dbReference type="ChEBI" id="CHEBI:58272"/>
    </reaction>
</comment>
<comment type="cofactor">
    <cofactor evidence="1">
        <name>Mg(2+)</name>
        <dbReference type="ChEBI" id="CHEBI:18420"/>
    </cofactor>
    <text evidence="1">Binds 1 Mg(2+) ion per subunit.</text>
</comment>
<comment type="subunit">
    <text evidence="1">Heterohexadecamer of 8 large chains and 8 small chains; disulfide-linked. The disulfide link is formed within the large subunit homodimers.</text>
</comment>
<comment type="subcellular location">
    <subcellularLocation>
        <location>Plastid</location>
        <location>Chloroplast</location>
    </subcellularLocation>
</comment>
<comment type="PTM">
    <text evidence="1">The disulfide bond which can form in the large chain dimeric partners within the hexadecamer appears to be associated with oxidative stress and protein turnover.</text>
</comment>
<comment type="miscellaneous">
    <text evidence="1">The basic functional RuBisCO is composed of a large chain homodimer in a 'head-to-tail' conformation. In form I RuBisCO this homodimer is arranged in a barrel-like tetramer with the small subunits forming a tetrameric 'cap' on each end of the 'barrel'.</text>
</comment>
<comment type="similarity">
    <text evidence="1">Belongs to the RuBisCO large chain family. Type I subfamily.</text>
</comment>
<geneLocation type="chloroplast"/>
<organism>
    <name type="scientific">Isophysis tasmanica</name>
    <dbReference type="NCBI Taxonomy" id="49752"/>
    <lineage>
        <taxon>Eukaryota</taxon>
        <taxon>Viridiplantae</taxon>
        <taxon>Streptophyta</taxon>
        <taxon>Embryophyta</taxon>
        <taxon>Tracheophyta</taxon>
        <taxon>Spermatophyta</taxon>
        <taxon>Magnoliopsida</taxon>
        <taxon>Liliopsida</taxon>
        <taxon>Asparagales</taxon>
        <taxon>Iridaceae</taxon>
        <taxon>Isophysidoideae</taxon>
        <taxon>Isophysis</taxon>
    </lineage>
</organism>
<name>RBL_ISOTA</name>
<gene>
    <name evidence="1" type="primary">rbcL</name>
</gene>